<reference key="1">
    <citation type="submission" date="1998-06" db="EMBL/GenBank/DDBJ databases">
        <title>Putative cDNA for S-adenosylmethionine decarboxylase from Nicotiana sylvestris.</title>
        <authorList>
            <person name="Nakakita M."/>
        </authorList>
    </citation>
    <scope>NUCLEOTIDE SEQUENCE [MRNA]</scope>
</reference>
<keyword id="KW-0068">Autocatalytic cleavage</keyword>
<keyword id="KW-0210">Decarboxylase</keyword>
<keyword id="KW-0456">Lyase</keyword>
<keyword id="KW-0620">Polyamine biosynthesis</keyword>
<keyword id="KW-0670">Pyruvate</keyword>
<keyword id="KW-1185">Reference proteome</keyword>
<keyword id="KW-0949">S-adenosyl-L-methionine</keyword>
<keyword id="KW-0704">Schiff base</keyword>
<keyword id="KW-0745">Spermidine biosynthesis</keyword>
<keyword id="KW-0865">Zymogen</keyword>
<gene>
    <name type="primary">SAMDC1</name>
    <name type="synonym">SAMDC-1</name>
</gene>
<evidence type="ECO:0000250" key="1"/>
<evidence type="ECO:0000305" key="2"/>
<feature type="chain" id="PRO_0000030015" description="S-adenosylmethionine decarboxylase beta chain" evidence="1">
    <location>
        <begin position="1"/>
        <end position="72"/>
    </location>
</feature>
<feature type="chain" id="PRO_0000030016" description="S-adenosylmethionine decarboxylase alpha chain" evidence="1">
    <location>
        <begin position="73"/>
        <end position="361"/>
    </location>
</feature>
<feature type="active site" evidence="1">
    <location>
        <position position="13"/>
    </location>
</feature>
<feature type="active site" evidence="1">
    <location>
        <position position="16"/>
    </location>
</feature>
<feature type="active site" description="Schiff-base intermediate with substrate; via pyruvic acid" evidence="1">
    <location>
        <position position="73"/>
    </location>
</feature>
<feature type="active site" description="Proton donor; for catalytic activity" evidence="1">
    <location>
        <position position="87"/>
    </location>
</feature>
<feature type="active site" description="Proton acceptor; for processing activity" evidence="1">
    <location>
        <position position="236"/>
    </location>
</feature>
<feature type="active site" description="Proton acceptor; for processing activity" evidence="1">
    <location>
        <position position="249"/>
    </location>
</feature>
<feature type="site" description="Cleavage (non-hydrolytic); by autolysis" evidence="1">
    <location>
        <begin position="72"/>
        <end position="73"/>
    </location>
</feature>
<feature type="modified residue" description="Pyruvic acid (Ser); by autocatalysis" evidence="1">
    <location>
        <position position="73"/>
    </location>
</feature>
<proteinExistence type="evidence at transcript level"/>
<accession>O80402</accession>
<sequence length="361" mass="39681">MDMALPVSAIGFEGFEKRLEISFFEPGLFADPNGKGLRSLSKAQLDEILGPAECTIVDSLSNDDVDSYVLSESSLFVYSYKIIIKTCGTTKLLLAIPPILKLAETLSLKVQDVRYTRGSFIFPGAQSFPHRHFSEEVAVLDGYFGKLAAGSKAVIMGSPDKAQKWHVYSASAGPIQSNDPVYTLEMCMTGLDREKASVFYKTEGSSAAHMTVRSGIRKILPNSEICDFEFEPCGYSMNSIEGAALSTIHITPEDGFSYASFEAVGYDMKTMKLGPLVERVLACFEPDEFSIALHADVATKLLERVCSVDVKGYSLAEWSPEEFGKGGSIVYQKFTRTPFCGSPKSVLKGCWKEDEEKEEKE</sequence>
<name>DCAM_NICSY</name>
<dbReference type="EC" id="4.1.1.50"/>
<dbReference type="EMBL" id="AB015609">
    <property type="protein sequence ID" value="BAA29040.1"/>
    <property type="molecule type" value="mRNA"/>
</dbReference>
<dbReference type="SMR" id="O80402"/>
<dbReference type="STRING" id="4096.O80402"/>
<dbReference type="eggNOG" id="KOG0788">
    <property type="taxonomic scope" value="Eukaryota"/>
</dbReference>
<dbReference type="UniPathway" id="UPA00331">
    <property type="reaction ID" value="UER00451"/>
</dbReference>
<dbReference type="Proteomes" id="UP000189701">
    <property type="component" value="Unplaced"/>
</dbReference>
<dbReference type="GO" id="GO:0005829">
    <property type="term" value="C:cytosol"/>
    <property type="evidence" value="ECO:0007669"/>
    <property type="project" value="TreeGrafter"/>
</dbReference>
<dbReference type="GO" id="GO:0004014">
    <property type="term" value="F:adenosylmethionine decarboxylase activity"/>
    <property type="evidence" value="ECO:0007669"/>
    <property type="project" value="UniProtKB-EC"/>
</dbReference>
<dbReference type="GO" id="GO:0008295">
    <property type="term" value="P:spermidine biosynthetic process"/>
    <property type="evidence" value="ECO:0007669"/>
    <property type="project" value="UniProtKB-KW"/>
</dbReference>
<dbReference type="GO" id="GO:0006597">
    <property type="term" value="P:spermine biosynthetic process"/>
    <property type="evidence" value="ECO:0007669"/>
    <property type="project" value="InterPro"/>
</dbReference>
<dbReference type="FunFam" id="3.30.360.50:FF:000001">
    <property type="entry name" value="S-adenosylmethionine decarboxylase proenzyme"/>
    <property type="match status" value="1"/>
</dbReference>
<dbReference type="FunFam" id="3.60.90.10:FF:000002">
    <property type="entry name" value="S-adenosylmethionine decarboxylase proenzyme"/>
    <property type="match status" value="1"/>
</dbReference>
<dbReference type="Gene3D" id="3.30.360.50">
    <property type="entry name" value="S-adenosylmethionine decarboxylase"/>
    <property type="match status" value="1"/>
</dbReference>
<dbReference type="Gene3D" id="3.60.90.10">
    <property type="entry name" value="S-adenosylmethionine decarboxylase"/>
    <property type="match status" value="1"/>
</dbReference>
<dbReference type="InterPro" id="IPR048283">
    <property type="entry name" value="AdoMetDC-like"/>
</dbReference>
<dbReference type="InterPro" id="IPR001985">
    <property type="entry name" value="S-AdoMet_decarboxylase_euk"/>
</dbReference>
<dbReference type="InterPro" id="IPR016067">
    <property type="entry name" value="S-AdoMet_deCO2ase_core"/>
</dbReference>
<dbReference type="InterPro" id="IPR018166">
    <property type="entry name" value="S-AdoMet_deCO2ase_CS"/>
</dbReference>
<dbReference type="NCBIfam" id="TIGR00535">
    <property type="entry name" value="SAM_DCase"/>
    <property type="match status" value="1"/>
</dbReference>
<dbReference type="PANTHER" id="PTHR11570">
    <property type="entry name" value="S-ADENOSYLMETHIONINE DECARBOXYLASE"/>
    <property type="match status" value="1"/>
</dbReference>
<dbReference type="PANTHER" id="PTHR11570:SF15">
    <property type="entry name" value="S-ADENOSYLMETHIONINE DECARBOXYLASE PROENZYME 3"/>
    <property type="match status" value="1"/>
</dbReference>
<dbReference type="Pfam" id="PF01536">
    <property type="entry name" value="SAM_decarbox"/>
    <property type="match status" value="1"/>
</dbReference>
<dbReference type="PIRSF" id="PIRSF001355">
    <property type="entry name" value="S-AdenosylMet_decarboxylase"/>
    <property type="match status" value="1"/>
</dbReference>
<dbReference type="SUPFAM" id="SSF56276">
    <property type="entry name" value="S-adenosylmethionine decarboxylase"/>
    <property type="match status" value="1"/>
</dbReference>
<dbReference type="PROSITE" id="PS01336">
    <property type="entry name" value="ADOMETDC"/>
    <property type="match status" value="1"/>
</dbReference>
<organism>
    <name type="scientific">Nicotiana sylvestris</name>
    <name type="common">Wood tobacco</name>
    <name type="synonym">South American tobacco</name>
    <dbReference type="NCBI Taxonomy" id="4096"/>
    <lineage>
        <taxon>Eukaryota</taxon>
        <taxon>Viridiplantae</taxon>
        <taxon>Streptophyta</taxon>
        <taxon>Embryophyta</taxon>
        <taxon>Tracheophyta</taxon>
        <taxon>Spermatophyta</taxon>
        <taxon>Magnoliopsida</taxon>
        <taxon>eudicotyledons</taxon>
        <taxon>Gunneridae</taxon>
        <taxon>Pentapetalae</taxon>
        <taxon>asterids</taxon>
        <taxon>lamiids</taxon>
        <taxon>Solanales</taxon>
        <taxon>Solanaceae</taxon>
        <taxon>Nicotianoideae</taxon>
        <taxon>Nicotianeae</taxon>
        <taxon>Nicotiana</taxon>
    </lineage>
</organism>
<comment type="catalytic activity">
    <reaction>
        <text>S-adenosyl-L-methionine + H(+) = S-adenosyl 3-(methylsulfanyl)propylamine + CO2</text>
        <dbReference type="Rhea" id="RHEA:15981"/>
        <dbReference type="ChEBI" id="CHEBI:15378"/>
        <dbReference type="ChEBI" id="CHEBI:16526"/>
        <dbReference type="ChEBI" id="CHEBI:57443"/>
        <dbReference type="ChEBI" id="CHEBI:59789"/>
        <dbReference type="EC" id="4.1.1.50"/>
    </reaction>
</comment>
<comment type="cofactor">
    <cofactor evidence="1">
        <name>pyruvate</name>
        <dbReference type="ChEBI" id="CHEBI:15361"/>
    </cofactor>
    <text evidence="1">Binds 1 pyruvoyl group covalently per subunit.</text>
</comment>
<comment type="pathway">
    <text>Amine and polyamine biosynthesis; S-adenosylmethioninamine biosynthesis; S-adenosylmethioninamine from S-adenosyl-L-methionine: step 1/1.</text>
</comment>
<comment type="PTM">
    <text evidence="1">Is synthesized initially as an inactive proenzyme. Formation of the active enzyme involves a self-maturation process in which the active site pyruvoyl group is generated from an internal serine residue via an autocatalytic post-translational modification. Two non-identical subunits are generated from the proenzyme in this reaction, and the pyruvate is formed at the N-terminus of the alpha chain, which is derived from the carboxyl end of the proenzyme. The post-translation cleavage follows an unusual pathway, termed non-hydrolytic serinolysis, in which the side chain hydroxyl group of the serine supplies its oxygen atom to form the C-terminus of the beta chain, while the remainder of the serine residue undergoes an oxidative deamination to produce ammonia and the pyruvoyl group blocking the N-terminus of the alpha chain (By similarity).</text>
</comment>
<comment type="similarity">
    <text evidence="2">Belongs to the eukaryotic AdoMetDC family.</text>
</comment>
<protein>
    <recommendedName>
        <fullName>S-adenosylmethionine decarboxylase proenzyme</fullName>
        <shortName>AdoMetDC</shortName>
        <shortName>SAMDC</shortName>
        <ecNumber>4.1.1.50</ecNumber>
    </recommendedName>
    <component>
        <recommendedName>
            <fullName>S-adenosylmethionine decarboxylase alpha chain</fullName>
        </recommendedName>
    </component>
    <component>
        <recommendedName>
            <fullName>S-adenosylmethionine decarboxylase beta chain</fullName>
        </recommendedName>
    </component>
</protein>